<gene>
    <name type="primary">dagK</name>
    <name type="ordered locus">SA1714</name>
</gene>
<name>DAGK_STAAN</name>
<sequence length="315" mass="34887">MRKRARIIYNPTSGKELFKRELPDALIKLEKAGYETSAYATEKIGDATLEAERAMHENYDVLIAAGGDGTLNEVVNGIAEKPNRPKLGVIPMGTVNDFGRALHIPNDIMGALDVIIEGHSTKVDIGKMNNRYFINLAAGGQLTQVSYETPSKLKSIVGPFAYYIKGFEMLPQMKAVDLRIEYDGNVFQGEALLFFLGLTNSMAGFEKLVPDAKLDDGYFTLIIVEKSNLAELGHIMTLASRGEHTKHPKVIYEKAKAINISSFTDLQLNVDGEYGGKLPANFLNLERHIDVFAPNDIVNEELINNDHVDDNLIEE</sequence>
<accession>Q7A4Q8</accession>
<keyword id="KW-0067">ATP-binding</keyword>
<keyword id="KW-0418">Kinase</keyword>
<keyword id="KW-0444">Lipid biosynthesis</keyword>
<keyword id="KW-0443">Lipid metabolism</keyword>
<keyword id="KW-0460">Magnesium</keyword>
<keyword id="KW-0479">Metal-binding</keyword>
<keyword id="KW-0547">Nucleotide-binding</keyword>
<keyword id="KW-0594">Phospholipid biosynthesis</keyword>
<keyword id="KW-1208">Phospholipid metabolism</keyword>
<keyword id="KW-0808">Transferase</keyword>
<organism>
    <name type="scientific">Staphylococcus aureus (strain N315)</name>
    <dbReference type="NCBI Taxonomy" id="158879"/>
    <lineage>
        <taxon>Bacteria</taxon>
        <taxon>Bacillati</taxon>
        <taxon>Bacillota</taxon>
        <taxon>Bacilli</taxon>
        <taxon>Bacillales</taxon>
        <taxon>Staphylococcaceae</taxon>
        <taxon>Staphylococcus</taxon>
    </lineage>
</organism>
<evidence type="ECO:0000250" key="1">
    <source>
        <dbReference type="UniProtKB" id="Q6GFF9"/>
    </source>
</evidence>
<evidence type="ECO:0000255" key="2">
    <source>
        <dbReference type="PROSITE-ProRule" id="PRU00783"/>
    </source>
</evidence>
<evidence type="ECO:0000305" key="3"/>
<protein>
    <recommendedName>
        <fullName>Diacylglycerol kinase</fullName>
        <shortName>DAG kinase</shortName>
        <shortName>DAGK</shortName>
        <ecNumber evidence="1">2.7.1.107</ecNumber>
    </recommendedName>
</protein>
<proteinExistence type="inferred from homology"/>
<dbReference type="EC" id="2.7.1.107" evidence="1"/>
<dbReference type="EMBL" id="BA000018">
    <property type="protein sequence ID" value="BAB42984.1"/>
    <property type="molecule type" value="Genomic_DNA"/>
</dbReference>
<dbReference type="PIR" id="A89978">
    <property type="entry name" value="A89978"/>
</dbReference>
<dbReference type="RefSeq" id="WP_001231451.1">
    <property type="nucleotide sequence ID" value="NC_002745.2"/>
</dbReference>
<dbReference type="SMR" id="Q7A4Q8"/>
<dbReference type="EnsemblBacteria" id="BAB42984">
    <property type="protein sequence ID" value="BAB42984"/>
    <property type="gene ID" value="BAB42984"/>
</dbReference>
<dbReference type="KEGG" id="sau:SA1714"/>
<dbReference type="HOGENOM" id="CLU_045532_1_0_9"/>
<dbReference type="GO" id="GO:0005886">
    <property type="term" value="C:plasma membrane"/>
    <property type="evidence" value="ECO:0007669"/>
    <property type="project" value="TreeGrafter"/>
</dbReference>
<dbReference type="GO" id="GO:0005524">
    <property type="term" value="F:ATP binding"/>
    <property type="evidence" value="ECO:0007669"/>
    <property type="project" value="UniProtKB-KW"/>
</dbReference>
<dbReference type="GO" id="GO:0004143">
    <property type="term" value="F:ATP-dependent diacylglycerol kinase activity"/>
    <property type="evidence" value="ECO:0007669"/>
    <property type="project" value="UniProtKB-EC"/>
</dbReference>
<dbReference type="GO" id="GO:0046872">
    <property type="term" value="F:metal ion binding"/>
    <property type="evidence" value="ECO:0007669"/>
    <property type="project" value="UniProtKB-KW"/>
</dbReference>
<dbReference type="GO" id="GO:0008654">
    <property type="term" value="P:phospholipid biosynthetic process"/>
    <property type="evidence" value="ECO:0007669"/>
    <property type="project" value="UniProtKB-KW"/>
</dbReference>
<dbReference type="FunFam" id="2.60.200.40:FF:000015">
    <property type="entry name" value="Diacylglycerol kinase"/>
    <property type="match status" value="1"/>
</dbReference>
<dbReference type="FunFam" id="3.40.50.10330:FF:000008">
    <property type="entry name" value="Probable lipid kinase YegS"/>
    <property type="match status" value="1"/>
</dbReference>
<dbReference type="Gene3D" id="2.60.200.40">
    <property type="match status" value="1"/>
</dbReference>
<dbReference type="Gene3D" id="3.40.50.10330">
    <property type="entry name" value="Probable inorganic polyphosphate/atp-NAD kinase, domain 1"/>
    <property type="match status" value="1"/>
</dbReference>
<dbReference type="InterPro" id="IPR017438">
    <property type="entry name" value="ATP-NAD_kinase_N"/>
</dbReference>
<dbReference type="InterPro" id="IPR005218">
    <property type="entry name" value="Diacylglycerol/lipid_kinase"/>
</dbReference>
<dbReference type="InterPro" id="IPR001206">
    <property type="entry name" value="Diacylglycerol_kinase_cat_dom"/>
</dbReference>
<dbReference type="InterPro" id="IPR050187">
    <property type="entry name" value="Lipid_Phosphate_FormReg"/>
</dbReference>
<dbReference type="InterPro" id="IPR016064">
    <property type="entry name" value="NAD/diacylglycerol_kinase_sf"/>
</dbReference>
<dbReference type="InterPro" id="IPR045540">
    <property type="entry name" value="YegS/DAGK_C"/>
</dbReference>
<dbReference type="NCBIfam" id="NF009603">
    <property type="entry name" value="PRK13055.1"/>
    <property type="match status" value="1"/>
</dbReference>
<dbReference type="NCBIfam" id="NF009874">
    <property type="entry name" value="PRK13337.1"/>
    <property type="match status" value="1"/>
</dbReference>
<dbReference type="NCBIfam" id="TIGR00147">
    <property type="entry name" value="YegS/Rv2252/BmrU family lipid kinase"/>
    <property type="match status" value="1"/>
</dbReference>
<dbReference type="PANTHER" id="PTHR12358:SF106">
    <property type="entry name" value="LIPID KINASE YEGS"/>
    <property type="match status" value="1"/>
</dbReference>
<dbReference type="PANTHER" id="PTHR12358">
    <property type="entry name" value="SPHINGOSINE KINASE"/>
    <property type="match status" value="1"/>
</dbReference>
<dbReference type="Pfam" id="PF00781">
    <property type="entry name" value="DAGK_cat"/>
    <property type="match status" value="1"/>
</dbReference>
<dbReference type="Pfam" id="PF19279">
    <property type="entry name" value="YegS_C"/>
    <property type="match status" value="1"/>
</dbReference>
<dbReference type="SMART" id="SM00046">
    <property type="entry name" value="DAGKc"/>
    <property type="match status" value="1"/>
</dbReference>
<dbReference type="SUPFAM" id="SSF111331">
    <property type="entry name" value="NAD kinase/diacylglycerol kinase-like"/>
    <property type="match status" value="1"/>
</dbReference>
<dbReference type="PROSITE" id="PS50146">
    <property type="entry name" value="DAGK"/>
    <property type="match status" value="1"/>
</dbReference>
<comment type="function">
    <text evidence="1">Catalyzes the phosphorylation of diacylglycerol (DAG) into phosphatidic acid. Is a key enzyme involved in the production of lipoteichoic acid by reintroducing DAG formed from the breakdown of membrane phospholipids into the phosphatidylglycerol biosynthetic pathway.</text>
</comment>
<comment type="catalytic activity">
    <reaction evidence="1">
        <text>a 1,2-diacyl-sn-glycerol + ATP = a 1,2-diacyl-sn-glycero-3-phosphate + ADP + H(+)</text>
        <dbReference type="Rhea" id="RHEA:10272"/>
        <dbReference type="ChEBI" id="CHEBI:15378"/>
        <dbReference type="ChEBI" id="CHEBI:17815"/>
        <dbReference type="ChEBI" id="CHEBI:30616"/>
        <dbReference type="ChEBI" id="CHEBI:58608"/>
        <dbReference type="ChEBI" id="CHEBI:456216"/>
        <dbReference type="EC" id="2.7.1.107"/>
    </reaction>
</comment>
<comment type="cofactor">
    <cofactor evidence="1">
        <name>Mg(2+)</name>
        <dbReference type="ChEBI" id="CHEBI:18420"/>
    </cofactor>
    <text evidence="1">Binds 1 Mg(2+) ion per subunit. This ion appears to have a structural role and is required for catalytic activity.</text>
</comment>
<comment type="subunit">
    <text evidence="1">Homodimer.</text>
</comment>
<comment type="similarity">
    <text evidence="3">Belongs to the diacylglycerol/lipid kinase family.</text>
</comment>
<feature type="chain" id="PRO_0000386494" description="Diacylglycerol kinase">
    <location>
        <begin position="1"/>
        <end position="315"/>
    </location>
</feature>
<feature type="domain" description="DAGKc" evidence="2">
    <location>
        <begin position="1"/>
        <end position="132"/>
    </location>
</feature>
<feature type="active site" description="Proton acceptor" evidence="1">
    <location>
        <position position="273"/>
    </location>
</feature>
<feature type="binding site" evidence="2">
    <location>
        <begin position="10"/>
        <end position="14"/>
    </location>
    <ligand>
        <name>ATP</name>
        <dbReference type="ChEBI" id="CHEBI:30616"/>
    </ligand>
</feature>
<feature type="binding site" evidence="2">
    <location>
        <position position="41"/>
    </location>
    <ligand>
        <name>ATP</name>
        <dbReference type="ChEBI" id="CHEBI:30616"/>
    </ligand>
</feature>
<feature type="binding site" evidence="2">
    <location>
        <begin position="67"/>
        <end position="73"/>
    </location>
    <ligand>
        <name>ATP</name>
        <dbReference type="ChEBI" id="CHEBI:30616"/>
    </ligand>
</feature>
<feature type="binding site" evidence="2">
    <location>
        <position position="94"/>
    </location>
    <ligand>
        <name>ATP</name>
        <dbReference type="ChEBI" id="CHEBI:30616"/>
    </ligand>
</feature>
<feature type="binding site" evidence="1">
    <location>
        <position position="213"/>
    </location>
    <ligand>
        <name>Mg(2+)</name>
        <dbReference type="ChEBI" id="CHEBI:18420"/>
    </ligand>
</feature>
<feature type="binding site" evidence="1">
    <location>
        <position position="216"/>
    </location>
    <ligand>
        <name>Mg(2+)</name>
        <dbReference type="ChEBI" id="CHEBI:18420"/>
    </ligand>
</feature>
<feature type="binding site" evidence="1">
    <location>
        <position position="218"/>
    </location>
    <ligand>
        <name>Mg(2+)</name>
        <dbReference type="ChEBI" id="CHEBI:18420"/>
    </ligand>
</feature>
<reference key="1">
    <citation type="journal article" date="2001" name="Lancet">
        <title>Whole genome sequencing of meticillin-resistant Staphylococcus aureus.</title>
        <authorList>
            <person name="Kuroda M."/>
            <person name="Ohta T."/>
            <person name="Uchiyama I."/>
            <person name="Baba T."/>
            <person name="Yuzawa H."/>
            <person name="Kobayashi I."/>
            <person name="Cui L."/>
            <person name="Oguchi A."/>
            <person name="Aoki K."/>
            <person name="Nagai Y."/>
            <person name="Lian J.-Q."/>
            <person name="Ito T."/>
            <person name="Kanamori M."/>
            <person name="Matsumaru H."/>
            <person name="Maruyama A."/>
            <person name="Murakami H."/>
            <person name="Hosoyama A."/>
            <person name="Mizutani-Ui Y."/>
            <person name="Takahashi N.K."/>
            <person name="Sawano T."/>
            <person name="Inoue R."/>
            <person name="Kaito C."/>
            <person name="Sekimizu K."/>
            <person name="Hirakawa H."/>
            <person name="Kuhara S."/>
            <person name="Goto S."/>
            <person name="Yabuzaki J."/>
            <person name="Kanehisa M."/>
            <person name="Yamashita A."/>
            <person name="Oshima K."/>
            <person name="Furuya K."/>
            <person name="Yoshino C."/>
            <person name="Shiba T."/>
            <person name="Hattori M."/>
            <person name="Ogasawara N."/>
            <person name="Hayashi H."/>
            <person name="Hiramatsu K."/>
        </authorList>
    </citation>
    <scope>NUCLEOTIDE SEQUENCE [LARGE SCALE GENOMIC DNA]</scope>
    <source>
        <strain>N315</strain>
    </source>
</reference>